<evidence type="ECO:0000250" key="1">
    <source>
        <dbReference type="UniProtKB" id="P56780"/>
    </source>
</evidence>
<evidence type="ECO:0000255" key="2">
    <source>
        <dbReference type="HAMAP-Rule" id="MF_00752"/>
    </source>
</evidence>
<evidence type="ECO:0000256" key="3">
    <source>
        <dbReference type="SAM" id="MobiDB-lite"/>
    </source>
</evidence>
<proteinExistence type="inferred from homology"/>
<keyword id="KW-0150">Chloroplast</keyword>
<keyword id="KW-0472">Membrane</keyword>
<keyword id="KW-0597">Phosphoprotein</keyword>
<keyword id="KW-0602">Photosynthesis</keyword>
<keyword id="KW-0604">Photosystem II</keyword>
<keyword id="KW-0934">Plastid</keyword>
<keyword id="KW-0793">Thylakoid</keyword>
<keyword id="KW-0812">Transmembrane</keyword>
<keyword id="KW-1133">Transmembrane helix</keyword>
<accession>Q68RX8</accession>
<feature type="initiator methionine" description="Removed" evidence="1">
    <location>
        <position position="1"/>
    </location>
</feature>
<feature type="chain" id="PRO_0000070525" description="Photosystem II reaction center protein H">
    <location>
        <begin position="2"/>
        <end position="73"/>
    </location>
</feature>
<feature type="transmembrane region" description="Helical" evidence="2">
    <location>
        <begin position="41"/>
        <end position="61"/>
    </location>
</feature>
<feature type="region of interest" description="Disordered" evidence="3">
    <location>
        <begin position="1"/>
        <end position="20"/>
    </location>
</feature>
<feature type="compositionally biased region" description="Polar residues" evidence="3">
    <location>
        <begin position="1"/>
        <end position="11"/>
    </location>
</feature>
<feature type="modified residue" description="Phosphothreonine" evidence="2">
    <location>
        <position position="3"/>
    </location>
</feature>
<feature type="modified residue" description="Phosphothreonine" evidence="2">
    <location>
        <position position="5"/>
    </location>
</feature>
<reference key="1">
    <citation type="journal article" date="2004" name="DNA Res.">
        <title>Complete chloroplast genome sequence from Korea ginseng (Panax schinseng Nees) and comparative analysis of sequence evolution among 17 vascular plants.</title>
        <authorList>
            <person name="Kim K.-J."/>
            <person name="Lee H.-L."/>
        </authorList>
    </citation>
    <scope>NUCLEOTIDE SEQUENCE [LARGE SCALE GENOMIC DNA]</scope>
</reference>
<comment type="function">
    <text evidence="2">One of the components of the core complex of photosystem II (PSII), required for its stability and/or assembly. PSII is a light-driven water:plastoquinone oxidoreductase that uses light energy to abstract electrons from H(2)O, generating O(2) and a proton gradient subsequently used for ATP formation. It consists of a core antenna complex that captures photons, and an electron transfer chain that converts photonic excitation into a charge separation.</text>
</comment>
<comment type="subunit">
    <text evidence="2">PSII is composed of 1 copy each of membrane proteins PsbA, PsbB, PsbC, PsbD, PsbE, PsbF, PsbH, PsbI, PsbJ, PsbK, PsbL, PsbM, PsbT, PsbX, PsbY, PsbZ, Psb30/Ycf12, at least 3 peripheral proteins of the oxygen-evolving complex and a large number of cofactors. It forms dimeric complexes.</text>
</comment>
<comment type="subcellular location">
    <subcellularLocation>
        <location evidence="2">Plastid</location>
        <location evidence="2">Chloroplast thylakoid membrane</location>
        <topology evidence="2">Single-pass membrane protein</topology>
    </subcellularLocation>
</comment>
<comment type="PTM">
    <text evidence="2">Phosphorylation is a light-dependent reaction catalyzed by a membrane-bound kinase; phosphorylation occurs on Thr residue(s) in the N-terminus of the protein.</text>
</comment>
<comment type="similarity">
    <text evidence="2">Belongs to the PsbH family.</text>
</comment>
<protein>
    <recommendedName>
        <fullName evidence="2">Photosystem II reaction center protein H</fullName>
        <shortName evidence="2">PSII-H</shortName>
    </recommendedName>
    <alternativeName>
        <fullName evidence="2">Photosystem II 10 kDa phosphoprotein</fullName>
    </alternativeName>
</protein>
<name>PSBH_PANGI</name>
<geneLocation type="chloroplast"/>
<dbReference type="EMBL" id="AY582139">
    <property type="protein sequence ID" value="AAT98537.1"/>
    <property type="molecule type" value="Genomic_DNA"/>
</dbReference>
<dbReference type="RefSeq" id="YP_086994.1">
    <property type="nucleotide sequence ID" value="NC_006290.1"/>
</dbReference>
<dbReference type="SMR" id="Q68RX8"/>
<dbReference type="GeneID" id="3021529"/>
<dbReference type="GO" id="GO:0009535">
    <property type="term" value="C:chloroplast thylakoid membrane"/>
    <property type="evidence" value="ECO:0007669"/>
    <property type="project" value="UniProtKB-SubCell"/>
</dbReference>
<dbReference type="GO" id="GO:0009523">
    <property type="term" value="C:photosystem II"/>
    <property type="evidence" value="ECO:0007669"/>
    <property type="project" value="UniProtKB-KW"/>
</dbReference>
<dbReference type="GO" id="GO:0042301">
    <property type="term" value="F:phosphate ion binding"/>
    <property type="evidence" value="ECO:0007669"/>
    <property type="project" value="InterPro"/>
</dbReference>
<dbReference type="GO" id="GO:0015979">
    <property type="term" value="P:photosynthesis"/>
    <property type="evidence" value="ECO:0007669"/>
    <property type="project" value="UniProtKB-UniRule"/>
</dbReference>
<dbReference type="GO" id="GO:0050821">
    <property type="term" value="P:protein stabilization"/>
    <property type="evidence" value="ECO:0007669"/>
    <property type="project" value="InterPro"/>
</dbReference>
<dbReference type="FunFam" id="1.20.5.880:FF:000001">
    <property type="entry name" value="Photosystem II reaction center protein H"/>
    <property type="match status" value="1"/>
</dbReference>
<dbReference type="Gene3D" id="1.20.5.880">
    <property type="entry name" value="Photosystem II reaction center protein H"/>
    <property type="match status" value="1"/>
</dbReference>
<dbReference type="HAMAP" id="MF_00752">
    <property type="entry name" value="PSII_PsbH"/>
    <property type="match status" value="1"/>
</dbReference>
<dbReference type="InterPro" id="IPR001056">
    <property type="entry name" value="PSII_PsbH"/>
</dbReference>
<dbReference type="InterPro" id="IPR036863">
    <property type="entry name" value="PSII_PsbH_sf"/>
</dbReference>
<dbReference type="NCBIfam" id="NF002728">
    <property type="entry name" value="PRK02624.1"/>
    <property type="match status" value="1"/>
</dbReference>
<dbReference type="PANTHER" id="PTHR34469">
    <property type="entry name" value="PHOTOSYSTEM II REACTION CENTER PROTEIN H"/>
    <property type="match status" value="1"/>
</dbReference>
<dbReference type="PANTHER" id="PTHR34469:SF4">
    <property type="entry name" value="PHOTOSYSTEM II REACTION CENTER PROTEIN H"/>
    <property type="match status" value="1"/>
</dbReference>
<dbReference type="Pfam" id="PF00737">
    <property type="entry name" value="PsbH"/>
    <property type="match status" value="1"/>
</dbReference>
<dbReference type="SUPFAM" id="SSF161025">
    <property type="entry name" value="Photosystem II 10 kDa phosphoprotein PsbH"/>
    <property type="match status" value="1"/>
</dbReference>
<gene>
    <name evidence="2" type="primary">psbH</name>
    <name type="ORF">PSC0765</name>
</gene>
<sequence>MATQTVENGSRSRPKPTTVGNLLKPLNSEYGKVAPGWGTTPLMGVAMALFAIFLSIILEIYNSSVLLDEISMN</sequence>
<organism>
    <name type="scientific">Panax ginseng</name>
    <name type="common">Korean ginseng</name>
    <dbReference type="NCBI Taxonomy" id="4054"/>
    <lineage>
        <taxon>Eukaryota</taxon>
        <taxon>Viridiplantae</taxon>
        <taxon>Streptophyta</taxon>
        <taxon>Embryophyta</taxon>
        <taxon>Tracheophyta</taxon>
        <taxon>Spermatophyta</taxon>
        <taxon>Magnoliopsida</taxon>
        <taxon>eudicotyledons</taxon>
        <taxon>Gunneridae</taxon>
        <taxon>Pentapetalae</taxon>
        <taxon>asterids</taxon>
        <taxon>campanulids</taxon>
        <taxon>Apiales</taxon>
        <taxon>Araliaceae</taxon>
        <taxon>Panax</taxon>
    </lineage>
</organism>